<reference key="1">
    <citation type="journal article" date="2002" name="Lancet">
        <title>Genome and virulence determinants of high virulence community-acquired MRSA.</title>
        <authorList>
            <person name="Baba T."/>
            <person name="Takeuchi F."/>
            <person name="Kuroda M."/>
            <person name="Yuzawa H."/>
            <person name="Aoki K."/>
            <person name="Oguchi A."/>
            <person name="Nagai Y."/>
            <person name="Iwama N."/>
            <person name="Asano K."/>
            <person name="Naimi T."/>
            <person name="Kuroda H."/>
            <person name="Cui L."/>
            <person name="Yamamoto K."/>
            <person name="Hiramatsu K."/>
        </authorList>
    </citation>
    <scope>NUCLEOTIDE SEQUENCE [LARGE SCALE GENOMIC DNA]</scope>
    <source>
        <strain>MW2</strain>
    </source>
</reference>
<gene>
    <name evidence="1" type="primary">mgt</name>
    <name type="ordered locus">MW1814</name>
</gene>
<proteinExistence type="evidence at protein level"/>
<feature type="chain" id="PRO_0000083158" description="Monofunctional glycosyltransferase">
    <location>
        <begin position="1"/>
        <end position="269"/>
    </location>
</feature>
<feature type="transmembrane region" description="Helical" evidence="1">
    <location>
        <begin position="46"/>
        <end position="66"/>
    </location>
</feature>
<feature type="helix" evidence="2">
    <location>
        <begin position="70"/>
        <end position="78"/>
    </location>
</feature>
<feature type="helix" evidence="2">
    <location>
        <begin position="85"/>
        <end position="87"/>
    </location>
</feature>
<feature type="helix" evidence="2">
    <location>
        <begin position="90"/>
        <end position="100"/>
    </location>
</feature>
<feature type="turn" evidence="2">
    <location>
        <begin position="102"/>
        <end position="106"/>
    </location>
</feature>
<feature type="strand" evidence="2">
    <location>
        <begin position="107"/>
        <end position="110"/>
    </location>
</feature>
<feature type="helix" evidence="2">
    <location>
        <begin position="112"/>
        <end position="120"/>
    </location>
</feature>
<feature type="strand" evidence="2">
    <location>
        <begin position="123"/>
        <end position="125"/>
    </location>
</feature>
<feature type="helix" evidence="2">
    <location>
        <begin position="134"/>
        <end position="142"/>
    </location>
</feature>
<feature type="helix" evidence="2">
    <location>
        <begin position="150"/>
        <end position="166"/>
    </location>
</feature>
<feature type="helix" evidence="2">
    <location>
        <begin position="169"/>
        <end position="177"/>
    </location>
</feature>
<feature type="helix" evidence="2">
    <location>
        <begin position="189"/>
        <end position="197"/>
    </location>
</feature>
<feature type="strand" evidence="2">
    <location>
        <begin position="206"/>
        <end position="208"/>
    </location>
</feature>
<feature type="helix" evidence="2">
    <location>
        <begin position="213"/>
        <end position="222"/>
    </location>
</feature>
<feature type="turn" evidence="2">
    <location>
        <begin position="226"/>
        <end position="228"/>
    </location>
</feature>
<feature type="strand" evidence="2">
    <location>
        <begin position="231"/>
        <end position="233"/>
    </location>
</feature>
<feature type="helix" evidence="2">
    <location>
        <begin position="236"/>
        <end position="251"/>
    </location>
</feature>
<feature type="helix" evidence="2">
    <location>
        <begin position="257"/>
        <end position="267"/>
    </location>
</feature>
<comment type="function">
    <text evidence="1">Peptidoglycan polymerase that catalyzes glycan chain elongation using lipid-linked disaccharide-pentapeptide as the substrate.</text>
</comment>
<comment type="catalytic activity">
    <reaction evidence="1">
        <text>[GlcNAc-(1-&gt;4)-Mur2Ac(oyl-L-Ala-gamma-D-Glu-L-Lys-D-Ala-D-Ala)](n)-di-trans,octa-cis-undecaprenyl diphosphate + beta-D-GlcNAc-(1-&gt;4)-Mur2Ac(oyl-L-Ala-gamma-D-Glu-L-Lys-D-Ala-D-Ala)-di-trans,octa-cis-undecaprenyl diphosphate = [GlcNAc-(1-&gt;4)-Mur2Ac(oyl-L-Ala-gamma-D-Glu-L-Lys-D-Ala-D-Ala)](n+1)-di-trans,octa-cis-undecaprenyl diphosphate + di-trans,octa-cis-undecaprenyl diphosphate + H(+)</text>
        <dbReference type="Rhea" id="RHEA:23708"/>
        <dbReference type="Rhea" id="RHEA-COMP:9602"/>
        <dbReference type="Rhea" id="RHEA-COMP:9603"/>
        <dbReference type="ChEBI" id="CHEBI:15378"/>
        <dbReference type="ChEBI" id="CHEBI:58405"/>
        <dbReference type="ChEBI" id="CHEBI:60033"/>
        <dbReference type="ChEBI" id="CHEBI:78435"/>
        <dbReference type="EC" id="2.4.99.28"/>
    </reaction>
</comment>
<comment type="pathway">
    <text evidence="1">Cell wall biogenesis; peptidoglycan biosynthesis.</text>
</comment>
<comment type="subcellular location">
    <subcellularLocation>
        <location evidence="1">Cell membrane</location>
        <topology evidence="1">Single-pass membrane protein</topology>
    </subcellularLocation>
</comment>
<comment type="similarity">
    <text evidence="1">Belongs to the glycosyltransferase 51 family.</text>
</comment>
<organism>
    <name type="scientific">Staphylococcus aureus (strain MW2)</name>
    <dbReference type="NCBI Taxonomy" id="196620"/>
    <lineage>
        <taxon>Bacteria</taxon>
        <taxon>Bacillati</taxon>
        <taxon>Bacillota</taxon>
        <taxon>Bacilli</taxon>
        <taxon>Bacillales</taxon>
        <taxon>Staphylococcaceae</taxon>
        <taxon>Staphylococcus</taxon>
    </lineage>
</organism>
<accession>Q7A0I6</accession>
<keyword id="KW-0002">3D-structure</keyword>
<keyword id="KW-1003">Cell membrane</keyword>
<keyword id="KW-0133">Cell shape</keyword>
<keyword id="KW-0961">Cell wall biogenesis/degradation</keyword>
<keyword id="KW-0328">Glycosyltransferase</keyword>
<keyword id="KW-0472">Membrane</keyword>
<keyword id="KW-0573">Peptidoglycan synthesis</keyword>
<keyword id="KW-0808">Transferase</keyword>
<keyword id="KW-0812">Transmembrane</keyword>
<keyword id="KW-1133">Transmembrane helix</keyword>
<name>MGT_STAAW</name>
<dbReference type="EC" id="2.4.99.28" evidence="1"/>
<dbReference type="EMBL" id="BA000033">
    <property type="protein sequence ID" value="BAB95679.1"/>
    <property type="molecule type" value="Genomic_DNA"/>
</dbReference>
<dbReference type="PDB" id="3HZS">
    <property type="method" value="X-ray"/>
    <property type="resolution" value="2.10 A"/>
    <property type="chains" value="A=68-268"/>
</dbReference>
<dbReference type="PDB" id="6FTB">
    <property type="method" value="X-ray"/>
    <property type="resolution" value="2.10 A"/>
    <property type="chains" value="A=68-268"/>
</dbReference>
<dbReference type="PDBsum" id="3HZS"/>
<dbReference type="PDBsum" id="6FTB"/>
<dbReference type="SMR" id="Q7A0I6"/>
<dbReference type="CAZy" id="GT51">
    <property type="family name" value="Glycosyltransferase Family 51"/>
</dbReference>
<dbReference type="KEGG" id="sam:MW1814"/>
<dbReference type="HOGENOM" id="CLU_006354_1_2_9"/>
<dbReference type="UniPathway" id="UPA00219"/>
<dbReference type="EvolutionaryTrace" id="Q7A0I6"/>
<dbReference type="GO" id="GO:0030288">
    <property type="term" value="C:outer membrane-bounded periplasmic space"/>
    <property type="evidence" value="ECO:0007669"/>
    <property type="project" value="TreeGrafter"/>
</dbReference>
<dbReference type="GO" id="GO:0005886">
    <property type="term" value="C:plasma membrane"/>
    <property type="evidence" value="ECO:0007669"/>
    <property type="project" value="UniProtKB-SubCell"/>
</dbReference>
<dbReference type="GO" id="GO:0008955">
    <property type="term" value="F:peptidoglycan glycosyltransferase activity"/>
    <property type="evidence" value="ECO:0007669"/>
    <property type="project" value="UniProtKB-UniRule"/>
</dbReference>
<dbReference type="GO" id="GO:0071555">
    <property type="term" value="P:cell wall organization"/>
    <property type="evidence" value="ECO:0007669"/>
    <property type="project" value="UniProtKB-KW"/>
</dbReference>
<dbReference type="GO" id="GO:0009252">
    <property type="term" value="P:peptidoglycan biosynthetic process"/>
    <property type="evidence" value="ECO:0007669"/>
    <property type="project" value="UniProtKB-UniRule"/>
</dbReference>
<dbReference type="GO" id="GO:0008360">
    <property type="term" value="P:regulation of cell shape"/>
    <property type="evidence" value="ECO:0007669"/>
    <property type="project" value="UniProtKB-KW"/>
</dbReference>
<dbReference type="Gene3D" id="1.10.3810.10">
    <property type="entry name" value="Biosynthetic peptidoglycan transglycosylase-like"/>
    <property type="match status" value="1"/>
</dbReference>
<dbReference type="HAMAP" id="MF_01434">
    <property type="entry name" value="MGT"/>
    <property type="match status" value="1"/>
</dbReference>
<dbReference type="InterPro" id="IPR001264">
    <property type="entry name" value="Glyco_trans_51"/>
</dbReference>
<dbReference type="InterPro" id="IPR050396">
    <property type="entry name" value="Glycosyltr_51/Transpeptidase"/>
</dbReference>
<dbReference type="InterPro" id="IPR023346">
    <property type="entry name" value="Lysozyme-like_dom_sf"/>
</dbReference>
<dbReference type="InterPro" id="IPR022978">
    <property type="entry name" value="Monofunct_glyco_trans"/>
</dbReference>
<dbReference type="InterPro" id="IPR036950">
    <property type="entry name" value="PBP_transglycosylase"/>
</dbReference>
<dbReference type="NCBIfam" id="NF010008">
    <property type="entry name" value="PRK13481.1"/>
    <property type="match status" value="1"/>
</dbReference>
<dbReference type="PANTHER" id="PTHR32282">
    <property type="entry name" value="BINDING PROTEIN TRANSPEPTIDASE, PUTATIVE-RELATED"/>
    <property type="match status" value="1"/>
</dbReference>
<dbReference type="PANTHER" id="PTHR32282:SF11">
    <property type="entry name" value="PENICILLIN-BINDING PROTEIN 1B"/>
    <property type="match status" value="1"/>
</dbReference>
<dbReference type="Pfam" id="PF00912">
    <property type="entry name" value="Transgly"/>
    <property type="match status" value="1"/>
</dbReference>
<dbReference type="SUPFAM" id="SSF53955">
    <property type="entry name" value="Lysozyme-like"/>
    <property type="match status" value="1"/>
</dbReference>
<protein>
    <recommendedName>
        <fullName evidence="1">Monofunctional glycosyltransferase</fullName>
        <shortName evidence="1">MGT</shortName>
        <ecNumber evidence="1">2.4.99.28</ecNumber>
    </recommendedName>
    <alternativeName>
        <fullName evidence="1">Peptidoglycan TGase</fullName>
    </alternativeName>
</protein>
<evidence type="ECO:0000255" key="1">
    <source>
        <dbReference type="HAMAP-Rule" id="MF_01434"/>
    </source>
</evidence>
<evidence type="ECO:0007829" key="2">
    <source>
        <dbReference type="PDB" id="3HZS"/>
    </source>
</evidence>
<sequence>MKRSDRYSNSNEHFEHMKHEPHYNTYYQPVGKPPKKKKSKRILLKILLTILIIIALFIGIMYFLSTRDNVDELRKIENKSSFVSADNMPEYVKGAFISMEDERFYNHHGFDLKGTTRALFSTISDRDVQGGSTITQQVVKNYFYDNDRSFTRKVKELFVAHRVEKQYNKNEILSFYLNNIYFGDNQYTLEGAANHYFGTTVNKNSTTMSHITVLQSAILASKVNAPSVYNINNMSENFTQRVSTNLEKMKQQNYINETQYQQAMSQLNR</sequence>